<organism>
    <name type="scientific">Mycobacterium sp. (strain KMS)</name>
    <dbReference type="NCBI Taxonomy" id="189918"/>
    <lineage>
        <taxon>Bacteria</taxon>
        <taxon>Bacillati</taxon>
        <taxon>Actinomycetota</taxon>
        <taxon>Actinomycetes</taxon>
        <taxon>Mycobacteriales</taxon>
        <taxon>Mycobacteriaceae</taxon>
        <taxon>Mycobacterium</taxon>
    </lineage>
</organism>
<evidence type="ECO:0000255" key="1">
    <source>
        <dbReference type="HAMAP-Rule" id="MF_01961"/>
    </source>
</evidence>
<evidence type="ECO:0000256" key="2">
    <source>
        <dbReference type="SAM" id="MobiDB-lite"/>
    </source>
</evidence>
<reference key="1">
    <citation type="submission" date="2006-12" db="EMBL/GenBank/DDBJ databases">
        <title>Complete sequence of chromosome of Mycobacterium sp. KMS.</title>
        <authorList>
            <consortium name="US DOE Joint Genome Institute"/>
            <person name="Copeland A."/>
            <person name="Lucas S."/>
            <person name="Lapidus A."/>
            <person name="Barry K."/>
            <person name="Detter J.C."/>
            <person name="Glavina del Rio T."/>
            <person name="Hammon N."/>
            <person name="Israni S."/>
            <person name="Dalin E."/>
            <person name="Tice H."/>
            <person name="Pitluck S."/>
            <person name="Kiss H."/>
            <person name="Brettin T."/>
            <person name="Bruce D."/>
            <person name="Han C."/>
            <person name="Tapia R."/>
            <person name="Gilna P."/>
            <person name="Schmutz J."/>
            <person name="Larimer F."/>
            <person name="Land M."/>
            <person name="Hauser L."/>
            <person name="Kyrpides N."/>
            <person name="Mikhailova N."/>
            <person name="Miller C.D."/>
            <person name="Richardson P."/>
        </authorList>
    </citation>
    <scope>NUCLEOTIDE SEQUENCE [LARGE SCALE GENOMIC DNA]</scope>
    <source>
        <strain>KMS</strain>
    </source>
</reference>
<sequence>MSSDTSDTRPPHSDSGTQSNSESENPIIDSPEPKAHAPLTNKDWWPEQVDVSVLHKQNDKGNPLGEDFNYAEAFAQLDLEAFKRDVIEVIQTSQDWWPADYGNYAGLFIRMSWHAAGTYRIFDGRGGAGQGSQRFAPLNSWPDNANLDKARRLLWPIKQKYGNKISWADLIAYAGNAALEQSGFKTAGFAFGREDIWEPEEMLWGQEDTWLGTDKRYGGTNEDKRELAEPFGATTMGLIYVNPEGPEGKPDPLAAAHDIRETFGRMAMNDEETAALIVGGHTLGKTHGAADVNVGPEPEGAPIEEQGLGWKCPFGTGNANDTVTSGLEVIWTGTNSEWSNRYLEILYGNEWELTKSPAGAWQFEAKNAEATIPDPFGGPPRKPTMLVTDVSMREDPIYGQITRRWLDHPEEMDEAFAKAWYKLMHRDMGPISRYLGPWVAEPEIWQDPVPDVDHELVDESDIASLKSKVLESGLTVQQLVKTAWASASSFRGTDKRGGANGARVRLEPQRSWEGNEPAELAKVLPTLEQIQQDFNASASGGKKISLADLIVLAGSAAVEKAAKDAGYEIDVHFAPGRTDASQEQTDVESFAVLETKADGFRNYIRPGQKTSVEKLLVEKAYLLDLTAPEMTALLGGLRVLNVNHGGSKHGVFTNSPGALSNDFFVNLLDMNTAWKPSENTENVFEGRDRATGEIKWTATANDLVFGSNSVLRGIAEVYAQDDSKDKFVEDFVAAWVKVMNNDRFDLEKF</sequence>
<keyword id="KW-0349">Heme</keyword>
<keyword id="KW-0376">Hydrogen peroxide</keyword>
<keyword id="KW-0408">Iron</keyword>
<keyword id="KW-0479">Metal-binding</keyword>
<keyword id="KW-0560">Oxidoreductase</keyword>
<keyword id="KW-0575">Peroxidase</keyword>
<gene>
    <name evidence="1" type="primary">katG</name>
    <name type="ordered locus">Mkms_2727</name>
</gene>
<comment type="function">
    <text evidence="1">Bifunctional enzyme with both catalase and broad-spectrum peroxidase activity.</text>
</comment>
<comment type="catalytic activity">
    <reaction evidence="1">
        <text>H2O2 + AH2 = A + 2 H2O</text>
        <dbReference type="Rhea" id="RHEA:30275"/>
        <dbReference type="ChEBI" id="CHEBI:13193"/>
        <dbReference type="ChEBI" id="CHEBI:15377"/>
        <dbReference type="ChEBI" id="CHEBI:16240"/>
        <dbReference type="ChEBI" id="CHEBI:17499"/>
        <dbReference type="EC" id="1.11.1.21"/>
    </reaction>
</comment>
<comment type="catalytic activity">
    <reaction evidence="1">
        <text>2 H2O2 = O2 + 2 H2O</text>
        <dbReference type="Rhea" id="RHEA:20309"/>
        <dbReference type="ChEBI" id="CHEBI:15377"/>
        <dbReference type="ChEBI" id="CHEBI:15379"/>
        <dbReference type="ChEBI" id="CHEBI:16240"/>
        <dbReference type="EC" id="1.11.1.21"/>
    </reaction>
</comment>
<comment type="cofactor">
    <cofactor evidence="1">
        <name>heme b</name>
        <dbReference type="ChEBI" id="CHEBI:60344"/>
    </cofactor>
    <text evidence="1">Binds 1 heme b (iron(II)-protoporphyrin IX) group per dimer.</text>
</comment>
<comment type="subunit">
    <text evidence="1">Homodimer or homotetramer.</text>
</comment>
<comment type="PTM">
    <text evidence="1">Formation of the three residue Trp-Tyr-Met cross-link is important for the catalase, but not the peroxidase activity of the enzyme.</text>
</comment>
<comment type="similarity">
    <text evidence="1">Belongs to the peroxidase family. Peroxidase/catalase subfamily.</text>
</comment>
<proteinExistence type="inferred from homology"/>
<feature type="chain" id="PRO_0000354842" description="Catalase-peroxidase">
    <location>
        <begin position="1"/>
        <end position="749"/>
    </location>
</feature>
<feature type="region of interest" description="Disordered" evidence="2">
    <location>
        <begin position="1"/>
        <end position="40"/>
    </location>
</feature>
<feature type="compositionally biased region" description="Basic and acidic residues" evidence="2">
    <location>
        <begin position="1"/>
        <end position="12"/>
    </location>
</feature>
<feature type="compositionally biased region" description="Polar residues" evidence="2">
    <location>
        <begin position="14"/>
        <end position="24"/>
    </location>
</feature>
<feature type="active site" description="Proton acceptor" evidence="1">
    <location>
        <position position="114"/>
    </location>
</feature>
<feature type="binding site" description="axial binding residue" evidence="1">
    <location>
        <position position="281"/>
    </location>
    <ligand>
        <name>heme b</name>
        <dbReference type="ChEBI" id="CHEBI:60344"/>
    </ligand>
    <ligandPart>
        <name>Fe</name>
        <dbReference type="ChEBI" id="CHEBI:18248"/>
    </ligandPart>
</feature>
<feature type="site" description="Transition state stabilizer" evidence="1">
    <location>
        <position position="110"/>
    </location>
</feature>
<feature type="cross-link" description="Tryptophyl-tyrosyl-methioninium (Trp-Tyr) (with M-266)" evidence="1">
    <location>
        <begin position="113"/>
        <end position="240"/>
    </location>
</feature>
<feature type="cross-link" description="Tryptophyl-tyrosyl-methioninium (Tyr-Met) (with W-113)" evidence="1">
    <location>
        <begin position="240"/>
        <end position="266"/>
    </location>
</feature>
<accession>A1UGG4</accession>
<protein>
    <recommendedName>
        <fullName evidence="1">Catalase-peroxidase</fullName>
        <shortName evidence="1">CP</shortName>
        <ecNumber evidence="1">1.11.1.21</ecNumber>
    </recommendedName>
    <alternativeName>
        <fullName evidence="1">Peroxidase/catalase</fullName>
    </alternativeName>
</protein>
<dbReference type="EC" id="1.11.1.21" evidence="1"/>
<dbReference type="EMBL" id="CP000518">
    <property type="protein sequence ID" value="ABL91922.1"/>
    <property type="molecule type" value="Genomic_DNA"/>
</dbReference>
<dbReference type="SMR" id="A1UGG4"/>
<dbReference type="STRING" id="189918.Mkms_2727"/>
<dbReference type="KEGG" id="mkm:Mkms_2727"/>
<dbReference type="HOGENOM" id="CLU_025424_2_0_11"/>
<dbReference type="OrthoDB" id="9759743at2"/>
<dbReference type="GO" id="GO:0005829">
    <property type="term" value="C:cytosol"/>
    <property type="evidence" value="ECO:0007669"/>
    <property type="project" value="TreeGrafter"/>
</dbReference>
<dbReference type="GO" id="GO:0004096">
    <property type="term" value="F:catalase activity"/>
    <property type="evidence" value="ECO:0007669"/>
    <property type="project" value="UniProtKB-UniRule"/>
</dbReference>
<dbReference type="GO" id="GO:0020037">
    <property type="term" value="F:heme binding"/>
    <property type="evidence" value="ECO:0007669"/>
    <property type="project" value="InterPro"/>
</dbReference>
<dbReference type="GO" id="GO:0046872">
    <property type="term" value="F:metal ion binding"/>
    <property type="evidence" value="ECO:0007669"/>
    <property type="project" value="UniProtKB-KW"/>
</dbReference>
<dbReference type="GO" id="GO:0070301">
    <property type="term" value="P:cellular response to hydrogen peroxide"/>
    <property type="evidence" value="ECO:0007669"/>
    <property type="project" value="TreeGrafter"/>
</dbReference>
<dbReference type="GO" id="GO:0042744">
    <property type="term" value="P:hydrogen peroxide catabolic process"/>
    <property type="evidence" value="ECO:0007669"/>
    <property type="project" value="UniProtKB-KW"/>
</dbReference>
<dbReference type="CDD" id="cd08200">
    <property type="entry name" value="catalase_peroxidase_2"/>
    <property type="match status" value="1"/>
</dbReference>
<dbReference type="FunFam" id="1.10.420.10:FF:000004">
    <property type="entry name" value="Catalase-peroxidase"/>
    <property type="match status" value="1"/>
</dbReference>
<dbReference type="FunFam" id="1.10.520.10:FF:000002">
    <property type="entry name" value="Catalase-peroxidase"/>
    <property type="match status" value="1"/>
</dbReference>
<dbReference type="Gene3D" id="1.10.520.10">
    <property type="match status" value="2"/>
</dbReference>
<dbReference type="Gene3D" id="1.10.420.10">
    <property type="entry name" value="Peroxidase, domain 2"/>
    <property type="match status" value="2"/>
</dbReference>
<dbReference type="HAMAP" id="MF_01961">
    <property type="entry name" value="Catal_peroxid"/>
    <property type="match status" value="1"/>
</dbReference>
<dbReference type="InterPro" id="IPR000763">
    <property type="entry name" value="Catalase_peroxidase"/>
</dbReference>
<dbReference type="InterPro" id="IPR002016">
    <property type="entry name" value="Haem_peroxidase"/>
</dbReference>
<dbReference type="InterPro" id="IPR010255">
    <property type="entry name" value="Haem_peroxidase_sf"/>
</dbReference>
<dbReference type="InterPro" id="IPR019794">
    <property type="entry name" value="Peroxidases_AS"/>
</dbReference>
<dbReference type="InterPro" id="IPR019793">
    <property type="entry name" value="Peroxidases_heam-ligand_BS"/>
</dbReference>
<dbReference type="NCBIfam" id="TIGR00198">
    <property type="entry name" value="cat_per_HPI"/>
    <property type="match status" value="1"/>
</dbReference>
<dbReference type="NCBIfam" id="NF011635">
    <property type="entry name" value="PRK15061.1"/>
    <property type="match status" value="1"/>
</dbReference>
<dbReference type="PANTHER" id="PTHR30555:SF0">
    <property type="entry name" value="CATALASE-PEROXIDASE"/>
    <property type="match status" value="1"/>
</dbReference>
<dbReference type="PANTHER" id="PTHR30555">
    <property type="entry name" value="HYDROPEROXIDASE I, BIFUNCTIONAL CATALASE-PEROXIDASE"/>
    <property type="match status" value="1"/>
</dbReference>
<dbReference type="Pfam" id="PF00141">
    <property type="entry name" value="peroxidase"/>
    <property type="match status" value="2"/>
</dbReference>
<dbReference type="PRINTS" id="PR00460">
    <property type="entry name" value="BPEROXIDASE"/>
</dbReference>
<dbReference type="PRINTS" id="PR00458">
    <property type="entry name" value="PEROXIDASE"/>
</dbReference>
<dbReference type="SUPFAM" id="SSF48113">
    <property type="entry name" value="Heme-dependent peroxidases"/>
    <property type="match status" value="2"/>
</dbReference>
<dbReference type="PROSITE" id="PS00435">
    <property type="entry name" value="PEROXIDASE_1"/>
    <property type="match status" value="1"/>
</dbReference>
<dbReference type="PROSITE" id="PS00436">
    <property type="entry name" value="PEROXIDASE_2"/>
    <property type="match status" value="1"/>
</dbReference>
<dbReference type="PROSITE" id="PS50873">
    <property type="entry name" value="PEROXIDASE_4"/>
    <property type="match status" value="1"/>
</dbReference>
<name>KATG_MYCSK</name>